<keyword id="KW-0378">Hydrolase</keyword>
<keyword id="KW-0645">Protease</keyword>
<keyword id="KW-1185">Reference proteome</keyword>
<keyword id="KW-0720">Serine protease</keyword>
<keyword id="KW-0732">Signal</keyword>
<name>YSP3_YEAST</name>
<protein>
    <recommendedName>
        <fullName>Subtilisin-like protease 3</fullName>
        <ecNumber>3.4.21.-</ecNumber>
    </recommendedName>
    <alternativeName>
        <fullName>Subtilisin-like protease III</fullName>
    </alternativeName>
</protein>
<proteinExistence type="evidence at transcript level"/>
<gene>
    <name type="primary">YSP3</name>
    <name type="ordered locus">YOR003W</name>
</gene>
<accession>P25036</accession>
<accession>D6W269</accession>
<dbReference type="EC" id="3.4.21.-"/>
<dbReference type="EMBL" id="M77197">
    <property type="protein sequence ID" value="AAA35237.1"/>
    <property type="molecule type" value="Genomic_DNA"/>
</dbReference>
<dbReference type="EMBL" id="U43491">
    <property type="protein sequence ID" value="AAC49482.1"/>
    <property type="molecule type" value="Genomic_DNA"/>
</dbReference>
<dbReference type="EMBL" id="Z74911">
    <property type="protein sequence ID" value="CAA99191.1"/>
    <property type="molecule type" value="Genomic_DNA"/>
</dbReference>
<dbReference type="EMBL" id="BK006948">
    <property type="protein sequence ID" value="DAA10785.1"/>
    <property type="molecule type" value="Genomic_DNA"/>
</dbReference>
<dbReference type="PIR" id="S61986">
    <property type="entry name" value="S61986"/>
</dbReference>
<dbReference type="RefSeq" id="NP_014645.1">
    <property type="nucleotide sequence ID" value="NM_001183422.1"/>
</dbReference>
<dbReference type="SMR" id="P25036"/>
<dbReference type="BioGRID" id="34406">
    <property type="interactions" value="65"/>
</dbReference>
<dbReference type="DIP" id="DIP-4198N"/>
<dbReference type="FunCoup" id="P25036">
    <property type="interactions" value="32"/>
</dbReference>
<dbReference type="IntAct" id="P25036">
    <property type="interactions" value="1"/>
</dbReference>
<dbReference type="STRING" id="4932.YOR003W"/>
<dbReference type="MEROPS" id="S08.A51"/>
<dbReference type="iPTMnet" id="P25036"/>
<dbReference type="PaxDb" id="4932-YOR003W"/>
<dbReference type="PeptideAtlas" id="P25036"/>
<dbReference type="TopDownProteomics" id="P25036"/>
<dbReference type="EnsemblFungi" id="YOR003W_mRNA">
    <property type="protein sequence ID" value="YOR003W"/>
    <property type="gene ID" value="YOR003W"/>
</dbReference>
<dbReference type="GeneID" id="854164"/>
<dbReference type="KEGG" id="sce:YOR003W"/>
<dbReference type="AGR" id="SGD:S000005529"/>
<dbReference type="SGD" id="S000005529">
    <property type="gene designation" value="YSP3"/>
</dbReference>
<dbReference type="VEuPathDB" id="FungiDB:YOR003W"/>
<dbReference type="eggNOG" id="KOG1153">
    <property type="taxonomic scope" value="Eukaryota"/>
</dbReference>
<dbReference type="GeneTree" id="ENSGT00940000176425"/>
<dbReference type="HOGENOM" id="CLU_011263_1_4_1"/>
<dbReference type="InParanoid" id="P25036"/>
<dbReference type="OMA" id="DSNYMFG"/>
<dbReference type="OrthoDB" id="206201at2759"/>
<dbReference type="BioCyc" id="YEAST:G3O-33553-MONOMER"/>
<dbReference type="Reactome" id="R-SCE-8866427">
    <property type="pathway name" value="VLDLR internalisation and degradation"/>
</dbReference>
<dbReference type="Reactome" id="R-SCE-8964038">
    <property type="pathway name" value="LDL clearance"/>
</dbReference>
<dbReference type="BioGRID-ORCS" id="854164">
    <property type="hits" value="2 hits in 10 CRISPR screens"/>
</dbReference>
<dbReference type="PRO" id="PR:P25036"/>
<dbReference type="Proteomes" id="UP000002311">
    <property type="component" value="Chromosome XV"/>
</dbReference>
<dbReference type="RNAct" id="P25036">
    <property type="molecule type" value="protein"/>
</dbReference>
<dbReference type="GO" id="GO:0005783">
    <property type="term" value="C:endoplasmic reticulum"/>
    <property type="evidence" value="ECO:0007005"/>
    <property type="project" value="SGD"/>
</dbReference>
<dbReference type="GO" id="GO:0005615">
    <property type="term" value="C:extracellular space"/>
    <property type="evidence" value="ECO:0000318"/>
    <property type="project" value="GO_Central"/>
</dbReference>
<dbReference type="GO" id="GO:0000328">
    <property type="term" value="C:fungal-type vacuole lumen"/>
    <property type="evidence" value="ECO:0007005"/>
    <property type="project" value="SGD"/>
</dbReference>
<dbReference type="GO" id="GO:0004252">
    <property type="term" value="F:serine-type endopeptidase activity"/>
    <property type="evidence" value="ECO:0000247"/>
    <property type="project" value="SGD"/>
</dbReference>
<dbReference type="GO" id="GO:0007039">
    <property type="term" value="P:protein catabolic process in the vacuole"/>
    <property type="evidence" value="ECO:0000247"/>
    <property type="project" value="SGD"/>
</dbReference>
<dbReference type="GO" id="GO:0006508">
    <property type="term" value="P:proteolysis"/>
    <property type="evidence" value="ECO:0007669"/>
    <property type="project" value="UniProtKB-KW"/>
</dbReference>
<dbReference type="CDD" id="cd04077">
    <property type="entry name" value="Peptidases_S8_PCSK9_ProteinaseK_like"/>
    <property type="match status" value="1"/>
</dbReference>
<dbReference type="FunFam" id="3.40.50.200:FF:000007">
    <property type="entry name" value="Subtilisin-like serine protease"/>
    <property type="match status" value="1"/>
</dbReference>
<dbReference type="Gene3D" id="3.40.50.200">
    <property type="entry name" value="Peptidase S8/S53 domain"/>
    <property type="match status" value="1"/>
</dbReference>
<dbReference type="InterPro" id="IPR034193">
    <property type="entry name" value="PCSK9_ProteinaseK-like"/>
</dbReference>
<dbReference type="InterPro" id="IPR000209">
    <property type="entry name" value="Peptidase_S8/S53_dom"/>
</dbReference>
<dbReference type="InterPro" id="IPR036852">
    <property type="entry name" value="Peptidase_S8/S53_dom_sf"/>
</dbReference>
<dbReference type="InterPro" id="IPR023827">
    <property type="entry name" value="Peptidase_S8_Asp-AS"/>
</dbReference>
<dbReference type="InterPro" id="IPR022398">
    <property type="entry name" value="Peptidase_S8_His-AS"/>
</dbReference>
<dbReference type="InterPro" id="IPR023828">
    <property type="entry name" value="Peptidase_S8_Ser-AS"/>
</dbReference>
<dbReference type="InterPro" id="IPR050131">
    <property type="entry name" value="Peptidase_S8_subtilisin-like"/>
</dbReference>
<dbReference type="InterPro" id="IPR015500">
    <property type="entry name" value="Peptidase_S8_subtilisin-rel"/>
</dbReference>
<dbReference type="InterPro" id="IPR010259">
    <property type="entry name" value="S8pro/Inhibitor_I9"/>
</dbReference>
<dbReference type="PANTHER" id="PTHR43806:SF11">
    <property type="entry name" value="CEREVISIN-RELATED"/>
    <property type="match status" value="1"/>
</dbReference>
<dbReference type="PANTHER" id="PTHR43806">
    <property type="entry name" value="PEPTIDASE S8"/>
    <property type="match status" value="1"/>
</dbReference>
<dbReference type="Pfam" id="PF05922">
    <property type="entry name" value="Inhibitor_I9"/>
    <property type="match status" value="1"/>
</dbReference>
<dbReference type="Pfam" id="PF00082">
    <property type="entry name" value="Peptidase_S8"/>
    <property type="match status" value="1"/>
</dbReference>
<dbReference type="PRINTS" id="PR00723">
    <property type="entry name" value="SUBTILISIN"/>
</dbReference>
<dbReference type="SUPFAM" id="SSF54897">
    <property type="entry name" value="Protease propeptides/inhibitors"/>
    <property type="match status" value="1"/>
</dbReference>
<dbReference type="SUPFAM" id="SSF52743">
    <property type="entry name" value="Subtilisin-like"/>
    <property type="match status" value="1"/>
</dbReference>
<dbReference type="PROSITE" id="PS51892">
    <property type="entry name" value="SUBTILASE"/>
    <property type="match status" value="1"/>
</dbReference>
<dbReference type="PROSITE" id="PS00136">
    <property type="entry name" value="SUBTILASE_ASP"/>
    <property type="match status" value="1"/>
</dbReference>
<dbReference type="PROSITE" id="PS00137">
    <property type="entry name" value="SUBTILASE_HIS"/>
    <property type="match status" value="1"/>
</dbReference>
<dbReference type="PROSITE" id="PS00138">
    <property type="entry name" value="SUBTILASE_SER"/>
    <property type="match status" value="1"/>
</dbReference>
<evidence type="ECO:0000250" key="1"/>
<evidence type="ECO:0000255" key="2"/>
<evidence type="ECO:0000255" key="3">
    <source>
        <dbReference type="PROSITE-ProRule" id="PRU01240"/>
    </source>
</evidence>
<evidence type="ECO:0000269" key="4">
    <source>
    </source>
</evidence>
<evidence type="ECO:0000269" key="5">
    <source>
    </source>
</evidence>
<evidence type="ECO:0000305" key="6"/>
<reference key="1">
    <citation type="submission" date="1991-10" db="EMBL/GenBank/DDBJ databases">
        <title>Nucleotide sequence of YSP3, a new subtilisin-like protease from Saccharomyces cerevisiae.</title>
        <authorList>
            <person name="Mason O.B."/>
            <person name="Wong P.A."/>
            <person name="Barr P.J."/>
        </authorList>
    </citation>
    <scope>NUCLEOTIDE SEQUENCE [GENOMIC DNA]</scope>
</reference>
<reference key="2">
    <citation type="journal article" date="1996" name="Yeast">
        <title>The sequence of a 30 kb fragment on the left arm of chromosome XV from Saccharomyces cerevisiae reveals 15 open reading frames, five of which correspond to previously identified genes.</title>
        <authorList>
            <person name="Sterky F."/>
            <person name="Holmberg A."/>
            <person name="Pettersson B."/>
            <person name="Uhlen M."/>
        </authorList>
    </citation>
    <scope>NUCLEOTIDE SEQUENCE [GENOMIC DNA]</scope>
</reference>
<reference key="3">
    <citation type="journal article" date="1997" name="Nature">
        <title>The nucleotide sequence of Saccharomyces cerevisiae chromosome XV.</title>
        <authorList>
            <person name="Dujon B."/>
            <person name="Albermann K."/>
            <person name="Aldea M."/>
            <person name="Alexandraki D."/>
            <person name="Ansorge W."/>
            <person name="Arino J."/>
            <person name="Benes V."/>
            <person name="Bohn C."/>
            <person name="Bolotin-Fukuhara M."/>
            <person name="Bordonne R."/>
            <person name="Boyer J."/>
            <person name="Camasses A."/>
            <person name="Casamayor A."/>
            <person name="Casas C."/>
            <person name="Cheret G."/>
            <person name="Cziepluch C."/>
            <person name="Daignan-Fornier B."/>
            <person name="Dang V.-D."/>
            <person name="de Haan M."/>
            <person name="Delius H."/>
            <person name="Durand P."/>
            <person name="Fairhead C."/>
            <person name="Feldmann H."/>
            <person name="Gaillon L."/>
            <person name="Galisson F."/>
            <person name="Gamo F.-J."/>
            <person name="Gancedo C."/>
            <person name="Goffeau A."/>
            <person name="Goulding S.E."/>
            <person name="Grivell L.A."/>
            <person name="Habbig B."/>
            <person name="Hand N.J."/>
            <person name="Hani J."/>
            <person name="Hattenhorst U."/>
            <person name="Hebling U."/>
            <person name="Hernando Y."/>
            <person name="Herrero E."/>
            <person name="Heumann K."/>
            <person name="Hiesel R."/>
            <person name="Hilger F."/>
            <person name="Hofmann B."/>
            <person name="Hollenberg C.P."/>
            <person name="Hughes B."/>
            <person name="Jauniaux J.-C."/>
            <person name="Kalogeropoulos A."/>
            <person name="Katsoulou C."/>
            <person name="Kordes E."/>
            <person name="Lafuente M.J."/>
            <person name="Landt O."/>
            <person name="Louis E.J."/>
            <person name="Maarse A.C."/>
            <person name="Madania A."/>
            <person name="Mannhaupt G."/>
            <person name="Marck C."/>
            <person name="Martin R.P."/>
            <person name="Mewes H.-W."/>
            <person name="Michaux G."/>
            <person name="Paces V."/>
            <person name="Parle-McDermott A.G."/>
            <person name="Pearson B.M."/>
            <person name="Perrin A."/>
            <person name="Pettersson B."/>
            <person name="Poch O."/>
            <person name="Pohl T.M."/>
            <person name="Poirey R."/>
            <person name="Portetelle D."/>
            <person name="Pujol A."/>
            <person name="Purnelle B."/>
            <person name="Ramezani Rad M."/>
            <person name="Rechmann S."/>
            <person name="Schwager C."/>
            <person name="Schweizer M."/>
            <person name="Sor F."/>
            <person name="Sterky F."/>
            <person name="Tarassov I.A."/>
            <person name="Teodoru C."/>
            <person name="Tettelin H."/>
            <person name="Thierry A."/>
            <person name="Tobiasch E."/>
            <person name="Tzermia M."/>
            <person name="Uhlen M."/>
            <person name="Unseld M."/>
            <person name="Valens M."/>
            <person name="Vandenbol M."/>
            <person name="Vetter I."/>
            <person name="Vlcek C."/>
            <person name="Voet M."/>
            <person name="Volckaert G."/>
            <person name="Voss H."/>
            <person name="Wambutt R."/>
            <person name="Wedler H."/>
            <person name="Wiemann S."/>
            <person name="Winsor B."/>
            <person name="Wolfe K.H."/>
            <person name="Zollner A."/>
            <person name="Zumstein E."/>
            <person name="Kleine K."/>
        </authorList>
    </citation>
    <scope>NUCLEOTIDE SEQUENCE [LARGE SCALE GENOMIC DNA]</scope>
    <source>
        <strain>ATCC 204508 / S288c</strain>
    </source>
</reference>
<reference key="4">
    <citation type="journal article" date="2014" name="G3 (Bethesda)">
        <title>The reference genome sequence of Saccharomyces cerevisiae: Then and now.</title>
        <authorList>
            <person name="Engel S.R."/>
            <person name="Dietrich F.S."/>
            <person name="Fisk D.G."/>
            <person name="Binkley G."/>
            <person name="Balakrishnan R."/>
            <person name="Costanzo M.C."/>
            <person name="Dwight S.S."/>
            <person name="Hitz B.C."/>
            <person name="Karra K."/>
            <person name="Nash R.S."/>
            <person name="Weng S."/>
            <person name="Wong E.D."/>
            <person name="Lloyd P."/>
            <person name="Skrzypek M.S."/>
            <person name="Miyasato S.R."/>
            <person name="Simison M."/>
            <person name="Cherry J.M."/>
        </authorList>
    </citation>
    <scope>GENOME REANNOTATION</scope>
    <source>
        <strain>ATCC 204508 / S288c</strain>
    </source>
</reference>
<reference key="5">
    <citation type="journal article" date="1998" name="Science">
        <title>The transcriptional program of sporulation in budding yeast.</title>
        <authorList>
            <person name="Chu S."/>
            <person name="DeRisi J."/>
            <person name="Eisen M."/>
            <person name="Mulholland J."/>
            <person name="Botstein D."/>
            <person name="Brown P.O."/>
            <person name="Herskowitz I."/>
        </authorList>
    </citation>
    <scope>INDUCTION</scope>
</reference>
<reference key="6">
    <citation type="journal article" date="2000" name="Mol. Microbiol.">
        <title>Identification of proteases with shared functions to the proprotein processing protease Krp1 in the fission yeast Schizosaccharomyces pombe.</title>
        <authorList>
            <person name="Ladds G."/>
            <person name="Davey J."/>
        </authorList>
    </citation>
    <scope>FUNCTION</scope>
</reference>
<comment type="function">
    <text evidence="1 4">Serine protease with unknown substrate.</text>
</comment>
<comment type="induction">
    <text evidence="5">Undergoes rapid but transient induction upon transfer to sporulation medium.</text>
</comment>
<comment type="similarity">
    <text evidence="6">Belongs to the peptidase S8 family.</text>
</comment>
<feature type="signal peptide" evidence="2">
    <location>
        <begin position="1"/>
        <end position="17"/>
    </location>
</feature>
<feature type="chain" id="PRO_0000027206" description="Subtilisin-like protease 3">
    <location>
        <begin position="18"/>
        <end position="478"/>
    </location>
</feature>
<feature type="domain" description="Inhibitor I9" evidence="2">
    <location>
        <begin position="70"/>
        <end position="167"/>
    </location>
</feature>
<feature type="domain" description="Peptidase S8" evidence="3">
    <location>
        <begin position="177"/>
        <end position="478"/>
    </location>
</feature>
<feature type="active site" description="Charge relay system" evidence="3">
    <location>
        <position position="213"/>
    </location>
</feature>
<feature type="active site" description="Charge relay system" evidence="3">
    <location>
        <position position="245"/>
    </location>
</feature>
<feature type="active site" description="Charge relay system" evidence="3">
    <location>
        <position position="407"/>
    </location>
</feature>
<feature type="sequence conflict" description="In Ref. 1; AAA35237." evidence="6" ref="1">
    <original>D</original>
    <variation>E</variation>
    <location>
        <position position="22"/>
    </location>
</feature>
<feature type="sequence conflict" description="In Ref. 1; AAA35237." evidence="6" ref="1">
    <original>N</original>
    <variation>D</variation>
    <location>
        <position position="105"/>
    </location>
</feature>
<feature type="sequence conflict" description="In Ref. 1." evidence="6" ref="1">
    <location>
        <begin position="189"/>
        <end position="205"/>
    </location>
</feature>
<feature type="sequence conflict" description="In Ref. 1; AAA35237." evidence="6" ref="1">
    <original>Y</original>
    <variation>L</variation>
    <location>
        <position position="289"/>
    </location>
</feature>
<organism>
    <name type="scientific">Saccharomyces cerevisiae (strain ATCC 204508 / S288c)</name>
    <name type="common">Baker's yeast</name>
    <dbReference type="NCBI Taxonomy" id="559292"/>
    <lineage>
        <taxon>Eukaryota</taxon>
        <taxon>Fungi</taxon>
        <taxon>Dikarya</taxon>
        <taxon>Ascomycota</taxon>
        <taxon>Saccharomycotina</taxon>
        <taxon>Saccharomycetes</taxon>
        <taxon>Saccharomycetales</taxon>
        <taxon>Saccharomycetaceae</taxon>
        <taxon>Saccharomyces</taxon>
    </lineage>
</organism>
<sequence length="478" mass="52089">MKFSTILPILWANCCLCMIIPDFDGIVRFIENIDGTRSVRAGEGLGQHDPGNFHTEHQHVAHKTEFLPYRYVIVFNEDISLQQIQSHMQVVQKDHSTSVGKLTENDAFWRVISSSVSSKSQFGGIDNFFDINGLFRGYTGYFTDEIIKIISQDPIIKFVEQETTVKISNSSLQEEAPWGLHRVSHREKPKYGQDLEYLYEDAAGKGVTSYVLDTGIDTEHEDFEGRAEWGAVIPANDEASDLNGHGTHCAGIIGSKHFGVAKNTKIVAVKVLRSNGEGTVSDVIKGIEYVTKEHIESSKKKNKEFKGSTANLSLGSSKSLAMEMAVNAAVDSGVHFAIAAGNEDEDACLSSPAGAEKSITVGASTFSDDRAFFSNWGTCVDVFAPGINIMSTYIGSRNATLSLSGTSMASPHVAGILSYFLSLQPAPDSEFFNDAPSPQELKEKVLKFSTQGVLGDIGDDTPNKLIYNGGGKKLDGFW</sequence>